<protein>
    <recommendedName>
        <fullName>PRELI domain-containing protein 2</fullName>
    </recommendedName>
</protein>
<accession>Q5BKH5</accession>
<reference key="1">
    <citation type="submission" date="2006-10" db="EMBL/GenBank/DDBJ databases">
        <authorList>
            <consortium name="Sanger Xenopus tropicalis EST/cDNA project"/>
        </authorList>
    </citation>
    <scope>NUCLEOTIDE SEQUENCE [LARGE SCALE MRNA]</scope>
    <source>
        <tissue>Gastrula</tissue>
    </source>
</reference>
<reference key="2">
    <citation type="submission" date="2005-03" db="EMBL/GenBank/DDBJ databases">
        <authorList>
            <consortium name="NIH - Xenopus Gene Collection (XGC) project"/>
        </authorList>
    </citation>
    <scope>NUCLEOTIDE SEQUENCE [LARGE SCALE MRNA]</scope>
</reference>
<organism>
    <name type="scientific">Xenopus tropicalis</name>
    <name type="common">Western clawed frog</name>
    <name type="synonym">Silurana tropicalis</name>
    <dbReference type="NCBI Taxonomy" id="8364"/>
    <lineage>
        <taxon>Eukaryota</taxon>
        <taxon>Metazoa</taxon>
        <taxon>Chordata</taxon>
        <taxon>Craniata</taxon>
        <taxon>Vertebrata</taxon>
        <taxon>Euteleostomi</taxon>
        <taxon>Amphibia</taxon>
        <taxon>Batrachia</taxon>
        <taxon>Anura</taxon>
        <taxon>Pipoidea</taxon>
        <taxon>Pipidae</taxon>
        <taxon>Xenopodinae</taxon>
        <taxon>Xenopus</taxon>
        <taxon>Silurana</taxon>
    </lineage>
</organism>
<sequence length="176" mass="20205">MGIAVEARKVYPYPFQHVVTSYLNKYPTPLEKHVLSVKTVEEKTDPATGVVYRKRIATCNNVIPSFLRRCSILKVSNVYLEEESWLDMKTRVMTLETHCLTWAQYATMKEESVYKECTENSNWTEFTQKGTITITGAGFLNRVLETFAQTFLSHGVKKSISIMETILRERCGCPFS</sequence>
<gene>
    <name type="primary">prelid2</name>
    <name type="ORF">TGas121a03.1</name>
</gene>
<evidence type="ECO:0000255" key="1">
    <source>
        <dbReference type="PROSITE-ProRule" id="PRU00158"/>
    </source>
</evidence>
<name>PRLD2_XENTR</name>
<keyword id="KW-1185">Reference proteome</keyword>
<feature type="chain" id="PRO_0000307776" description="PRELI domain-containing protein 2">
    <location>
        <begin position="1"/>
        <end position="176"/>
    </location>
</feature>
<feature type="domain" description="PRELI/MSF1" evidence="1">
    <location>
        <begin position="1"/>
        <end position="175"/>
    </location>
</feature>
<dbReference type="EMBL" id="CR848108">
    <property type="protein sequence ID" value="CAJ81589.1"/>
    <property type="molecule type" value="mRNA"/>
</dbReference>
<dbReference type="EMBL" id="BC091072">
    <property type="protein sequence ID" value="AAH91072.1"/>
    <property type="molecule type" value="mRNA"/>
</dbReference>
<dbReference type="RefSeq" id="NP_001016922.1">
    <property type="nucleotide sequence ID" value="NM_001016922.2"/>
</dbReference>
<dbReference type="SMR" id="Q5BKH5"/>
<dbReference type="FunCoup" id="Q5BKH5">
    <property type="interactions" value="28"/>
</dbReference>
<dbReference type="PaxDb" id="8364-ENSXETP00000016698"/>
<dbReference type="DNASU" id="549676"/>
<dbReference type="GeneID" id="549676"/>
<dbReference type="KEGG" id="xtr:549676"/>
<dbReference type="AGR" id="Xenbase:XB-GENE-943679"/>
<dbReference type="CTD" id="153768"/>
<dbReference type="Xenbase" id="XB-GENE-943679">
    <property type="gene designation" value="prelid2"/>
</dbReference>
<dbReference type="eggNOG" id="ENOG502RYVE">
    <property type="taxonomic scope" value="Eukaryota"/>
</dbReference>
<dbReference type="HOGENOM" id="CLU_067902_6_0_1"/>
<dbReference type="InParanoid" id="Q5BKH5"/>
<dbReference type="OMA" id="CRNVVPE"/>
<dbReference type="OrthoDB" id="407630at2759"/>
<dbReference type="PhylomeDB" id="Q5BKH5"/>
<dbReference type="TreeFam" id="TF337953"/>
<dbReference type="Proteomes" id="UP000008143">
    <property type="component" value="Chromosome 3"/>
</dbReference>
<dbReference type="Bgee" id="ENSXETG00000027124">
    <property type="expression patterns" value="Expressed in heart and 13 other cell types or tissues"/>
</dbReference>
<dbReference type="ExpressionAtlas" id="Q5BKH5">
    <property type="expression patterns" value="baseline"/>
</dbReference>
<dbReference type="GO" id="GO:0005758">
    <property type="term" value="C:mitochondrial intermembrane space"/>
    <property type="evidence" value="ECO:0007669"/>
    <property type="project" value="InterPro"/>
</dbReference>
<dbReference type="InterPro" id="IPR006797">
    <property type="entry name" value="PRELI/MSF1_dom"/>
</dbReference>
<dbReference type="InterPro" id="IPR037365">
    <property type="entry name" value="Slowmo/Ups"/>
</dbReference>
<dbReference type="PANTHER" id="PTHR11158">
    <property type="entry name" value="MSF1/PX19 RELATED"/>
    <property type="match status" value="1"/>
</dbReference>
<dbReference type="Pfam" id="PF04707">
    <property type="entry name" value="PRELI"/>
    <property type="match status" value="1"/>
</dbReference>
<dbReference type="PROSITE" id="PS50904">
    <property type="entry name" value="PRELI_MSF1"/>
    <property type="match status" value="1"/>
</dbReference>
<proteinExistence type="evidence at transcript level"/>